<feature type="peptide" id="PRO_0000335874" description="Bradykinin-potentiating peptide 11">
    <location>
        <begin position="1"/>
        <end position="11"/>
    </location>
</feature>
<feature type="modified residue" description="Pyrrolidone carboxylic acid" evidence="2">
    <location>
        <position position="1"/>
    </location>
</feature>
<proteinExistence type="evidence at protein level"/>
<dbReference type="GO" id="GO:0005576">
    <property type="term" value="C:extracellular region"/>
    <property type="evidence" value="ECO:0007669"/>
    <property type="project" value="UniProtKB-SubCell"/>
</dbReference>
<dbReference type="GO" id="GO:0030414">
    <property type="term" value="F:peptidase inhibitor activity"/>
    <property type="evidence" value="ECO:0007669"/>
    <property type="project" value="UniProtKB-KW"/>
</dbReference>
<dbReference type="GO" id="GO:0090729">
    <property type="term" value="F:toxin activity"/>
    <property type="evidence" value="ECO:0007669"/>
    <property type="project" value="UniProtKB-KW"/>
</dbReference>
<dbReference type="GO" id="GO:0008217">
    <property type="term" value="P:regulation of blood pressure"/>
    <property type="evidence" value="ECO:0007669"/>
    <property type="project" value="UniProtKB-KW"/>
</dbReference>
<name>BPP11_BOTJA</name>
<comment type="function">
    <text evidence="1">Bradykinin-potentiating peptides both inhibits the activity of the angiotensin-converting enzyme (ACE) and enhances the action of bradykinin by inhibiting the peptidases that inactivate it. It acts as an indirect hypotensive agent (By similarity).</text>
</comment>
<comment type="subcellular location">
    <subcellularLocation>
        <location evidence="2">Secreted</location>
    </subcellularLocation>
</comment>
<comment type="tissue specificity">
    <text evidence="2">Expressed by the venom gland.</text>
</comment>
<comment type="mass spectrometry"/>
<comment type="similarity">
    <text evidence="3">Belongs to the bradykinin-potentiating peptide family.</text>
</comment>
<evidence type="ECO:0000250" key="1"/>
<evidence type="ECO:0000269" key="2">
    <source>
    </source>
</evidence>
<evidence type="ECO:0000305" key="3"/>
<accession>P0C7J8</accession>
<sequence>QGGAGWPPIPP</sequence>
<organism>
    <name type="scientific">Bothrops jararaca</name>
    <name type="common">Jararaca</name>
    <name type="synonym">Bothrops jajaraca</name>
    <dbReference type="NCBI Taxonomy" id="8724"/>
    <lineage>
        <taxon>Eukaryota</taxon>
        <taxon>Metazoa</taxon>
        <taxon>Chordata</taxon>
        <taxon>Craniata</taxon>
        <taxon>Vertebrata</taxon>
        <taxon>Euteleostomi</taxon>
        <taxon>Lepidosauria</taxon>
        <taxon>Squamata</taxon>
        <taxon>Bifurcata</taxon>
        <taxon>Unidentata</taxon>
        <taxon>Episquamata</taxon>
        <taxon>Toxicofera</taxon>
        <taxon>Serpentes</taxon>
        <taxon>Colubroidea</taxon>
        <taxon>Viperidae</taxon>
        <taxon>Crotalinae</taxon>
        <taxon>Bothrops</taxon>
    </lineage>
</organism>
<reference key="1">
    <citation type="journal article" date="2005" name="Rapid Commun. Mass Spectrom.">
        <title>Fast analysis of low molecular mass compounds present in snake venom: identification of ten new pyroglutamate-containing peptides.</title>
        <authorList>
            <person name="Wermelinger L.S."/>
            <person name="Dutra D.L."/>
            <person name="Oliveira-Carvalho A.L."/>
            <person name="Soares M.R."/>
            <person name="Bloch C. Jr."/>
            <person name="Zingali R.B."/>
        </authorList>
    </citation>
    <scope>PROTEIN SEQUENCE</scope>
    <scope>SUBCELLULAR LOCATION</scope>
    <scope>TISSUE SPECIFICITY</scope>
    <scope>MASS SPECTROMETRY</scope>
    <scope>PYROGLUTAMATE FORMATION AT GLN-1</scope>
    <source>
        <tissue>Venom</tissue>
    </source>
</reference>
<keyword id="KW-0903">Direct protein sequencing</keyword>
<keyword id="KW-0382">Hypotensive agent</keyword>
<keyword id="KW-0481">Metalloenzyme inhibitor</keyword>
<keyword id="KW-0483">Metalloprotease inhibitor</keyword>
<keyword id="KW-0646">Protease inhibitor</keyword>
<keyword id="KW-0873">Pyrrolidone carboxylic acid</keyword>
<keyword id="KW-0964">Secreted</keyword>
<keyword id="KW-0800">Toxin</keyword>
<protein>
    <recommendedName>
        <fullName>Bradykinin-potentiating peptide 11</fullName>
        <shortName>BPP-11</shortName>
    </recommendedName>
</protein>